<comment type="similarity">
    <text evidence="3">Belongs to the short-chain dehydrogenases/reductases (SDR) family.</text>
</comment>
<name>ADHR_DROGU</name>
<reference key="1">
    <citation type="journal article" date="1993" name="Mol. Phylogenet. Evol.">
        <title>Characterization and evolution of the Adh genomic region in Drosophila guanche and Drosophila madeirensis.</title>
        <authorList>
            <person name="Marfany G."/>
            <person name="Gonzalez-Duarte R."/>
        </authorList>
    </citation>
    <scope>NUCLEOTIDE SEQUENCE [GENOMIC DNA]</scope>
</reference>
<dbReference type="EMBL" id="X60113">
    <property type="protein sequence ID" value="CAA42712.1"/>
    <property type="molecule type" value="Genomic_DNA"/>
</dbReference>
<dbReference type="PIR" id="B40731">
    <property type="entry name" value="B40731"/>
</dbReference>
<dbReference type="SMR" id="Q09007"/>
<dbReference type="EnsemblMetazoa" id="XM_034283963.1">
    <property type="protein sequence ID" value="XP_034139854.1"/>
    <property type="gene ID" value="LOC117590926"/>
</dbReference>
<dbReference type="OMA" id="CDEQDID"/>
<dbReference type="OrthoDB" id="417891at2759"/>
<dbReference type="GO" id="GO:0005737">
    <property type="term" value="C:cytoplasm"/>
    <property type="evidence" value="ECO:0007669"/>
    <property type="project" value="TreeGrafter"/>
</dbReference>
<dbReference type="GO" id="GO:0016491">
    <property type="term" value="F:oxidoreductase activity"/>
    <property type="evidence" value="ECO:0007669"/>
    <property type="project" value="UniProtKB-KW"/>
</dbReference>
<dbReference type="CDD" id="cd05323">
    <property type="entry name" value="ADH_SDR_c_like"/>
    <property type="match status" value="1"/>
</dbReference>
<dbReference type="Gene3D" id="3.40.50.720">
    <property type="entry name" value="NAD(P)-binding Rossmann-like Domain"/>
    <property type="match status" value="1"/>
</dbReference>
<dbReference type="InterPro" id="IPR002427">
    <property type="entry name" value="ADH-rel"/>
</dbReference>
<dbReference type="InterPro" id="IPR036291">
    <property type="entry name" value="NAD(P)-bd_dom_sf"/>
</dbReference>
<dbReference type="InterPro" id="IPR020904">
    <property type="entry name" value="Sc_DH/Rdtase_CS"/>
</dbReference>
<dbReference type="InterPro" id="IPR002347">
    <property type="entry name" value="SDR_fam"/>
</dbReference>
<dbReference type="PANTHER" id="PTHR44229">
    <property type="entry name" value="15-HYDROXYPROSTAGLANDIN DEHYDROGENASE [NAD(+)]"/>
    <property type="match status" value="1"/>
</dbReference>
<dbReference type="PANTHER" id="PTHR44229:SF8">
    <property type="entry name" value="ALCOHOL DEHYDROGENASE-RELATED"/>
    <property type="match status" value="1"/>
</dbReference>
<dbReference type="Pfam" id="PF00106">
    <property type="entry name" value="adh_short"/>
    <property type="match status" value="1"/>
</dbReference>
<dbReference type="PRINTS" id="PR01170">
    <property type="entry name" value="ADHRELATED"/>
</dbReference>
<dbReference type="PRINTS" id="PR01167">
    <property type="entry name" value="INSADHFAMILY"/>
</dbReference>
<dbReference type="PRINTS" id="PR00080">
    <property type="entry name" value="SDRFAMILY"/>
</dbReference>
<dbReference type="SUPFAM" id="SSF51735">
    <property type="entry name" value="NAD(P)-binding Rossmann-fold domains"/>
    <property type="match status" value="1"/>
</dbReference>
<dbReference type="PROSITE" id="PS00061">
    <property type="entry name" value="ADH_SHORT"/>
    <property type="match status" value="1"/>
</dbReference>
<organism>
    <name type="scientific">Drosophila guanche</name>
    <name type="common">Fruit fly</name>
    <dbReference type="NCBI Taxonomy" id="7266"/>
    <lineage>
        <taxon>Eukaryota</taxon>
        <taxon>Metazoa</taxon>
        <taxon>Ecdysozoa</taxon>
        <taxon>Arthropoda</taxon>
        <taxon>Hexapoda</taxon>
        <taxon>Insecta</taxon>
        <taxon>Pterygota</taxon>
        <taxon>Neoptera</taxon>
        <taxon>Endopterygota</taxon>
        <taxon>Diptera</taxon>
        <taxon>Brachycera</taxon>
        <taxon>Muscomorpha</taxon>
        <taxon>Ephydroidea</taxon>
        <taxon>Drosophilidae</taxon>
        <taxon>Drosophila</taxon>
        <taxon>Sophophora</taxon>
    </lineage>
</organism>
<sequence length="279" mass="30988">MYDLTGKHVCYVADCGGIALETSKVLMTKNIAKLAVLQSVENQPAIAQLQSIKHSTQIFFWTFDVTMARQEMKKYFDEVMVQMDYIDVLINGATLCDERNIDATINTNLTGMMNTVATVLPYMDRKMGGSGGLIVNVTSVIGLDPSPVFCAYSASKFGVIGFTRSLADPLYYTQNGVAVMAVCCGPTKVFVDRELNAFLEYGQTFADRLRCAPCQSTASCGQNIVTAIERSENGQIWIADKGGLEMVTLHWYWHMADQFLSYMQSTDDDNQEQFVSGRR</sequence>
<keyword id="KW-0560">Oxidoreductase</keyword>
<evidence type="ECO:0000250" key="1"/>
<evidence type="ECO:0000255" key="2">
    <source>
        <dbReference type="PROSITE-ProRule" id="PRU10001"/>
    </source>
</evidence>
<evidence type="ECO:0000305" key="3"/>
<feature type="chain" id="PRO_0000054504" description="Alcohol dehydrogenase-related 31 kDa protein">
    <location>
        <begin position="1"/>
        <end position="279"/>
    </location>
</feature>
<feature type="active site" description="Proton acceptor" evidence="2">
    <location>
        <position position="152"/>
    </location>
</feature>
<feature type="binding site" evidence="1">
    <location>
        <begin position="11"/>
        <end position="34"/>
    </location>
    <ligand>
        <name>NAD(+)</name>
        <dbReference type="ChEBI" id="CHEBI:57540"/>
    </ligand>
</feature>
<feature type="binding site" evidence="1">
    <location>
        <position position="139"/>
    </location>
    <ligand>
        <name>substrate</name>
    </ligand>
</feature>
<protein>
    <recommendedName>
        <fullName>Alcohol dehydrogenase-related 31 kDa protein</fullName>
    </recommendedName>
</protein>
<accession>Q09007</accession>
<proteinExistence type="inferred from homology"/>
<gene>
    <name type="primary">Adhr</name>
    <name type="synonym">Adh-dup</name>
</gene>